<keyword id="KW-0472">Membrane</keyword>
<keyword id="KW-0812">Transmembrane</keyword>
<keyword id="KW-1133">Transmembrane helix</keyword>
<feature type="chain" id="PRO_0000299672" description="Putative uncharacterized protein YMR193C-A">
    <location>
        <begin position="1"/>
        <end position="128"/>
    </location>
</feature>
<feature type="transmembrane region" description="Helical" evidence="1">
    <location>
        <begin position="45"/>
        <end position="65"/>
    </location>
</feature>
<feature type="transmembrane region" description="Helical" evidence="1">
    <location>
        <begin position="95"/>
        <end position="115"/>
    </location>
</feature>
<gene>
    <name type="ordered locus">YMR193C-A</name>
</gene>
<accession>Q6B0R2</accession>
<name>YM193_YEAST</name>
<organism>
    <name type="scientific">Saccharomyces cerevisiae (strain ATCC 204508 / S288c)</name>
    <name type="common">Baker's yeast</name>
    <dbReference type="NCBI Taxonomy" id="559292"/>
    <lineage>
        <taxon>Eukaryota</taxon>
        <taxon>Fungi</taxon>
        <taxon>Dikarya</taxon>
        <taxon>Ascomycota</taxon>
        <taxon>Saccharomycotina</taxon>
        <taxon>Saccharomycetes</taxon>
        <taxon>Saccharomycetales</taxon>
        <taxon>Saccharomycetaceae</taxon>
        <taxon>Saccharomyces</taxon>
    </lineage>
</organism>
<protein>
    <recommendedName>
        <fullName>Putative uncharacterized protein YMR193C-A</fullName>
    </recommendedName>
</protein>
<dbReference type="EMBL" id="Z47815">
    <property type="status" value="NOT_ANNOTATED_CDS"/>
    <property type="molecule type" value="Genomic_DNA"/>
</dbReference>
<dbReference type="EMBL" id="AY693368">
    <property type="protein sequence ID" value="AAT93387.1"/>
    <property type="molecule type" value="Genomic_DNA"/>
</dbReference>
<dbReference type="SMR" id="Q6B0R2"/>
<dbReference type="iPTMnet" id="Q6B0R2"/>
<dbReference type="PaxDb" id="4932-YMR193C-A"/>
<dbReference type="EnsemblFungi" id="YMR193C-A_mRNA">
    <property type="protein sequence ID" value="YMR193C-A"/>
    <property type="gene ID" value="YMR193C-A"/>
</dbReference>
<dbReference type="AGR" id="SGD:S000004805"/>
<dbReference type="SGD" id="S000004805">
    <property type="gene designation" value="YMR193C-A"/>
</dbReference>
<dbReference type="HOGENOM" id="CLU_1961318_0_0_1"/>
<dbReference type="GO" id="GO:0016020">
    <property type="term" value="C:membrane"/>
    <property type="evidence" value="ECO:0007669"/>
    <property type="project" value="UniProtKB-SubCell"/>
</dbReference>
<evidence type="ECO:0000255" key="1"/>
<evidence type="ECO:0000305" key="2"/>
<evidence type="ECO:0000305" key="3">
    <source>
    </source>
</evidence>
<reference key="1">
    <citation type="journal article" date="1997" name="Nature">
        <title>The nucleotide sequence of Saccharomyces cerevisiae chromosome XIII.</title>
        <authorList>
            <person name="Bowman S."/>
            <person name="Churcher C.M."/>
            <person name="Badcock K."/>
            <person name="Brown D."/>
            <person name="Chillingworth T."/>
            <person name="Connor R."/>
            <person name="Dedman K."/>
            <person name="Devlin K."/>
            <person name="Gentles S."/>
            <person name="Hamlin N."/>
            <person name="Hunt S."/>
            <person name="Jagels K."/>
            <person name="Lye G."/>
            <person name="Moule S."/>
            <person name="Odell C."/>
            <person name="Pearson D."/>
            <person name="Rajandream M.A."/>
            <person name="Rice P."/>
            <person name="Skelton J."/>
            <person name="Walsh S.V."/>
            <person name="Whitehead S."/>
            <person name="Barrell B.G."/>
        </authorList>
    </citation>
    <scope>NUCLEOTIDE SEQUENCE [LARGE SCALE GENOMIC DNA]</scope>
    <source>
        <strain>ATCC 204508 / S288c</strain>
    </source>
</reference>
<reference key="2">
    <citation type="journal article" date="2014" name="G3 (Bethesda)">
        <title>The reference genome sequence of Saccharomyces cerevisiae: Then and now.</title>
        <authorList>
            <person name="Engel S.R."/>
            <person name="Dietrich F.S."/>
            <person name="Fisk D.G."/>
            <person name="Binkley G."/>
            <person name="Balakrishnan R."/>
            <person name="Costanzo M.C."/>
            <person name="Dwight S.S."/>
            <person name="Hitz B.C."/>
            <person name="Karra K."/>
            <person name="Nash R.S."/>
            <person name="Weng S."/>
            <person name="Wong E.D."/>
            <person name="Lloyd P."/>
            <person name="Skrzypek M.S."/>
            <person name="Miyasato S.R."/>
            <person name="Simison M."/>
            <person name="Cherry J.M."/>
        </authorList>
    </citation>
    <scope>GENOME REANNOTATION</scope>
    <source>
        <strain>ATCC 204508 / S288c</strain>
    </source>
</reference>
<reference key="3">
    <citation type="journal article" date="2007" name="Genome Res.">
        <title>Approaching a complete repository of sequence-verified protein-encoding clones for Saccharomyces cerevisiae.</title>
        <authorList>
            <person name="Hu Y."/>
            <person name="Rolfs A."/>
            <person name="Bhullar B."/>
            <person name="Murthy T.V.S."/>
            <person name="Zhu C."/>
            <person name="Berger M.F."/>
            <person name="Camargo A.A."/>
            <person name="Kelley F."/>
            <person name="McCarron S."/>
            <person name="Jepson D."/>
            <person name="Richardson A."/>
            <person name="Raphael J."/>
            <person name="Moreira D."/>
            <person name="Taycher E."/>
            <person name="Zuo D."/>
            <person name="Mohr S."/>
            <person name="Kane M.F."/>
            <person name="Williamson J."/>
            <person name="Simpson A.J.G."/>
            <person name="Bulyk M.L."/>
            <person name="Harlow E."/>
            <person name="Marsischky G."/>
            <person name="Kolodner R.D."/>
            <person name="LaBaer J."/>
        </authorList>
    </citation>
    <scope>NUCLEOTIDE SEQUENCE [GENOMIC DNA]</scope>
    <source>
        <strain>ATCC 204508 / S288c</strain>
    </source>
</reference>
<sequence length="128" mass="15360">MFHLKAFSQYYSFCKMDLIFKHNSFLDRSEEISLCMHIKWYFSSGYFHWSLITQNYIIFLFLFPFKFSMHSCSSRIWGKPLYKFENRHNPFSSLFMSHIPVLTVISYCVCCLSCFFDTCKSVLYCSTS</sequence>
<proteinExistence type="uncertain"/>
<comment type="subcellular location">
    <subcellularLocation>
        <location evidence="2">Membrane</location>
        <topology evidence="2">Multi-pass membrane protein</topology>
    </subcellularLocation>
</comment>
<comment type="miscellaneous">
    <text evidence="2">Partially overlaps RPL36A.</text>
</comment>
<comment type="caution">
    <text evidence="3">Product of a dubious gene prediction unlikely to encode a functional protein. Because of that it is not part of the S.cerevisiae S288c complete/reference proteome set.</text>
</comment>